<reference key="1">
    <citation type="journal article" date="1986" name="J. Gen. Virol.">
        <title>The complete DNA sequence of varicella-zoster virus.</title>
        <authorList>
            <person name="Davison A.J."/>
            <person name="Scott J.E."/>
        </authorList>
    </citation>
    <scope>NUCLEOTIDE SEQUENCE [LARGE SCALE GENOMIC DNA]</scope>
</reference>
<reference key="2">
    <citation type="journal article" date="1992" name="J. Virol.">
        <title>Varicella-zoster virus open reading frame 61 protein is functionally homologous to herpes simplex virus type 1 ICP0.</title>
        <authorList>
            <person name="Moriuchi H."/>
            <person name="Moriuchi M."/>
            <person name="Smith H.A."/>
            <person name="Straus S.E."/>
            <person name="Cohen J.I."/>
        </authorList>
    </citation>
    <scope>CHARACTERIZATION</scope>
</reference>
<reference key="3">
    <citation type="journal article" date="2010" name="J. Virol.">
        <title>The RING finger domain of Varicella-Zoster virus ORF61p has E3 ubiquitin ligase activity that is essential for efficient autoubiquitination and dispersion of Sp100-containing nuclear bodies.</title>
        <authorList>
            <person name="Walters M.S."/>
            <person name="Kyratsous C.A."/>
            <person name="Silverstein S.J."/>
        </authorList>
    </citation>
    <scope>FUNCTION</scope>
    <scope>AUTOUBIQUITINATION</scope>
    <scope>MUTAGENESIS OF CYS-19</scope>
</reference>
<reference key="4">
    <citation type="journal article" date="2012" name="J. Virol.">
        <title>Varicella-zoster virus inhibition of the NF-kappaB pathway during infection of human dendritic cells: role for open reading frame 61 as a modulator of NF-kappaB activity.</title>
        <authorList>
            <person name="Sloan E."/>
            <person name="Henriquez R."/>
            <person name="Kinchington P.R."/>
            <person name="Slobedman B."/>
            <person name="Abendroth A."/>
        </authorList>
    </citation>
    <scope>FUNCTION</scope>
</reference>
<reference key="5">
    <citation type="journal article" date="2015" name="J. Virol.">
        <title>The ORF61 protein encoded by simian varicella virus and varicella-zoster Virus inhibits NF-kappaB signaling by interfering with IkappaBalpha degradation.</title>
        <authorList>
            <person name="Whitmer T."/>
            <person name="Malouli D."/>
            <person name="Uebelhoer L.S."/>
            <person name="DeFilippis V.R."/>
            <person name="Frueh K."/>
            <person name="Verweij M.C."/>
        </authorList>
    </citation>
    <scope>FUNCTION</scope>
</reference>
<sequence length="467" mass="50916">MDTILAGGSGTSDASDNTCTICMSTVSDLGKTMPCLHDFCFVCIRAWTSTSVQCPLCRCPVQSILHKIVSDTSYKEYEVHPSDDDGFSEPSFEDSIDILPGDVIDLLPPSPGPSRESIQQPTSRSSREPIQSPNPGPLQSSAREPTAESPSDSQQDSIQPPTRDSSPGVTKTCSTASFLRKVFFKDQPAVRSATPVVYGSIESAQQPRTGGQDYRDRPVSVGINQDPRTMDRLPFRATDRGTEGNARFPCYMQPLLGWLDDQLAELYQPEIVEPTKMLILNYIGIYGRDEAGLKTSLRCLLHDSTGPFVTNMLFLLDRCTDPTRLTMQTWTWKDTAIQLITGPIVRPETTSTGETSRGDERDTRLVNTPQKVRLFSVLPGIKPGSARGAKRRLFHTGRDVKRCLTIDLTSESDSACKGSKTRKVASPQGESNTPSTSGSTSGSLKHLTKKSSAGKAGKGIPNKMKKS</sequence>
<comment type="function">
    <text evidence="4 5 6">RING-finger E3 ubiquitin ligase that degrades host SP100, one of the major components of ND10 nuclear bodies, thereby disrupting the organization of these bodies. Also plays a role in the inhibition of host NF-kappa-B pathway by blocking the SCF(BTRC)-mediated addition of ubiquitin chains to host I-kappa-B-alpha/NFKBIA, thereby interfering with its degradation.</text>
</comment>
<comment type="catalytic activity">
    <reaction>
        <text>S-ubiquitinyl-[E2 ubiquitin-conjugating enzyme]-L-cysteine + [acceptor protein]-L-lysine = [E2 ubiquitin-conjugating enzyme]-L-cysteine + N(6)-ubiquitinyl-[acceptor protein]-L-lysine.</text>
        <dbReference type="EC" id="2.3.2.27"/>
    </reaction>
</comment>
<comment type="subunit">
    <text evidence="1">Interacts with host BTRC; this interaction seems to inactivate SCF-mediated protein degradation in general.</text>
</comment>
<comment type="induction">
    <text>Immediate early (EI) protein.</text>
</comment>
<comment type="PTM">
    <text evidence="4">Auto-ubiquitinated.</text>
</comment>
<proteinExistence type="evidence at protein level"/>
<evidence type="ECO:0000250" key="1">
    <source>
        <dbReference type="UniProtKB" id="Q9E1W2"/>
    </source>
</evidence>
<evidence type="ECO:0000255" key="2">
    <source>
        <dbReference type="PROSITE-ProRule" id="PRU00175"/>
    </source>
</evidence>
<evidence type="ECO:0000256" key="3">
    <source>
        <dbReference type="SAM" id="MobiDB-lite"/>
    </source>
</evidence>
<evidence type="ECO:0000269" key="4">
    <source>
    </source>
</evidence>
<evidence type="ECO:0000269" key="5">
    <source>
    </source>
</evidence>
<evidence type="ECO:0000269" key="6">
    <source>
    </source>
</evidence>
<evidence type="ECO:0000305" key="7"/>
<accession>P09309</accession>
<keyword id="KW-0238">DNA-binding</keyword>
<keyword id="KW-0945">Host-virus interaction</keyword>
<keyword id="KW-0479">Metal-binding</keyword>
<keyword id="KW-1128">Modulation of host ubiquitin pathway by viral E3 ligase</keyword>
<keyword id="KW-1130">Modulation of host ubiquitin pathway by virus</keyword>
<keyword id="KW-1185">Reference proteome</keyword>
<keyword id="KW-0678">Repressor</keyword>
<keyword id="KW-0804">Transcription</keyword>
<keyword id="KW-0805">Transcription regulation</keyword>
<keyword id="KW-0808">Transferase</keyword>
<keyword id="KW-0832">Ubl conjugation</keyword>
<keyword id="KW-0833">Ubl conjugation pathway</keyword>
<keyword id="KW-0862">Zinc</keyword>
<keyword id="KW-0863">Zinc-finger</keyword>
<feature type="chain" id="PRO_0000056359" description="E3 ubiquitin-protein ligase IE61">
    <location>
        <begin position="1"/>
        <end position="467"/>
    </location>
</feature>
<feature type="zinc finger region" description="RING-type" evidence="2">
    <location>
        <begin position="19"/>
        <end position="58"/>
    </location>
</feature>
<feature type="region of interest" description="Disordered" evidence="3">
    <location>
        <begin position="101"/>
        <end position="171"/>
    </location>
</feature>
<feature type="region of interest" description="Disordered" evidence="3">
    <location>
        <begin position="205"/>
        <end position="238"/>
    </location>
</feature>
<feature type="region of interest" description="Disordered" evidence="3">
    <location>
        <begin position="344"/>
        <end position="364"/>
    </location>
</feature>
<feature type="region of interest" description="Disordered" evidence="3">
    <location>
        <begin position="413"/>
        <end position="467"/>
    </location>
</feature>
<feature type="compositionally biased region" description="Polar residues" evidence="3">
    <location>
        <begin position="116"/>
        <end position="143"/>
    </location>
</feature>
<feature type="compositionally biased region" description="Low complexity" evidence="3">
    <location>
        <begin position="149"/>
        <end position="161"/>
    </location>
</feature>
<feature type="compositionally biased region" description="Polar residues" evidence="3">
    <location>
        <begin position="162"/>
        <end position="171"/>
    </location>
</feature>
<feature type="compositionally biased region" description="Basic and acidic residues" evidence="3">
    <location>
        <begin position="228"/>
        <end position="238"/>
    </location>
</feature>
<feature type="compositionally biased region" description="Low complexity" evidence="3">
    <location>
        <begin position="429"/>
        <end position="443"/>
    </location>
</feature>
<feature type="compositionally biased region" description="Low complexity" evidence="3">
    <location>
        <begin position="450"/>
        <end position="459"/>
    </location>
</feature>
<feature type="mutagenesis site" description="Loss of SP100-containing nuclear bodies dispersion." evidence="4">
    <original>C</original>
    <variation>G</variation>
    <location>
        <position position="19"/>
    </location>
</feature>
<protein>
    <recommendedName>
        <fullName>E3 ubiquitin-protein ligase IE61</fullName>
        <ecNumber>2.3.2.27</ecNumber>
    </recommendedName>
    <alternativeName>
        <fullName>Immediate-early protein 61</fullName>
        <shortName>IE61</shortName>
    </alternativeName>
    <alternativeName>
        <fullName evidence="7">RING-type E3 ubiquitin transferase IE61</fullName>
    </alternativeName>
</protein>
<name>IE61_VZVD</name>
<dbReference type="EC" id="2.3.2.27"/>
<dbReference type="EMBL" id="X04370">
    <property type="protein sequence ID" value="CAA27944.1"/>
    <property type="molecule type" value="Genomic_DNA"/>
</dbReference>
<dbReference type="PIR" id="I27215">
    <property type="entry name" value="WZBE61"/>
</dbReference>
<dbReference type="Proteomes" id="UP000002602">
    <property type="component" value="Genome"/>
</dbReference>
<dbReference type="GO" id="GO:0003677">
    <property type="term" value="F:DNA binding"/>
    <property type="evidence" value="ECO:0007669"/>
    <property type="project" value="UniProtKB-KW"/>
</dbReference>
<dbReference type="GO" id="GO:0061630">
    <property type="term" value="F:ubiquitin protein ligase activity"/>
    <property type="evidence" value="ECO:0007669"/>
    <property type="project" value="TreeGrafter"/>
</dbReference>
<dbReference type="GO" id="GO:0008270">
    <property type="term" value="F:zinc ion binding"/>
    <property type="evidence" value="ECO:0007669"/>
    <property type="project" value="UniProtKB-KW"/>
</dbReference>
<dbReference type="GO" id="GO:0006513">
    <property type="term" value="P:protein monoubiquitination"/>
    <property type="evidence" value="ECO:0007669"/>
    <property type="project" value="TreeGrafter"/>
</dbReference>
<dbReference type="GO" id="GO:0000209">
    <property type="term" value="P:protein polyubiquitination"/>
    <property type="evidence" value="ECO:0007669"/>
    <property type="project" value="TreeGrafter"/>
</dbReference>
<dbReference type="GO" id="GO:0039648">
    <property type="term" value="P:symbiont-mediated perturbation of host ubiquitin-like protein modification"/>
    <property type="evidence" value="ECO:0007669"/>
    <property type="project" value="UniProtKB-KW"/>
</dbReference>
<dbReference type="CDD" id="cd23130">
    <property type="entry name" value="RING-HC_EHV1-like"/>
    <property type="match status" value="1"/>
</dbReference>
<dbReference type="Gene3D" id="3.30.40.10">
    <property type="entry name" value="Zinc/RING finger domain, C3HC4 (zinc finger)"/>
    <property type="match status" value="1"/>
</dbReference>
<dbReference type="InterPro" id="IPR018957">
    <property type="entry name" value="Znf_C3HC4_RING-type"/>
</dbReference>
<dbReference type="InterPro" id="IPR001841">
    <property type="entry name" value="Znf_RING"/>
</dbReference>
<dbReference type="InterPro" id="IPR013083">
    <property type="entry name" value="Znf_RING/FYVE/PHD"/>
</dbReference>
<dbReference type="InterPro" id="IPR017907">
    <property type="entry name" value="Znf_RING_CS"/>
</dbReference>
<dbReference type="PANTHER" id="PTHR46077">
    <property type="entry name" value="E3 UBIQUITIN-PROTEIN LIGASE TOPORS"/>
    <property type="match status" value="1"/>
</dbReference>
<dbReference type="PANTHER" id="PTHR46077:SF1">
    <property type="entry name" value="TOP1 BINDING ARGININE_SERINE RICH PROTEIN, E3 UBIQUITIN LIGASE"/>
    <property type="match status" value="1"/>
</dbReference>
<dbReference type="Pfam" id="PF00097">
    <property type="entry name" value="zf-C3HC4"/>
    <property type="match status" value="1"/>
</dbReference>
<dbReference type="SMART" id="SM00184">
    <property type="entry name" value="RING"/>
    <property type="match status" value="1"/>
</dbReference>
<dbReference type="SUPFAM" id="SSF57850">
    <property type="entry name" value="RING/U-box"/>
    <property type="match status" value="1"/>
</dbReference>
<dbReference type="PROSITE" id="PS00518">
    <property type="entry name" value="ZF_RING_1"/>
    <property type="match status" value="1"/>
</dbReference>
<dbReference type="PROSITE" id="PS50089">
    <property type="entry name" value="ZF_RING_2"/>
    <property type="match status" value="1"/>
</dbReference>
<organism>
    <name type="scientific">Varicella-zoster virus (strain Dumas)</name>
    <name type="common">HHV-3</name>
    <name type="synonym">Human herpesvirus 3</name>
    <dbReference type="NCBI Taxonomy" id="10338"/>
    <lineage>
        <taxon>Viruses</taxon>
        <taxon>Duplodnaviria</taxon>
        <taxon>Heunggongvirae</taxon>
        <taxon>Peploviricota</taxon>
        <taxon>Herviviricetes</taxon>
        <taxon>Herpesvirales</taxon>
        <taxon>Orthoherpesviridae</taxon>
        <taxon>Alphaherpesvirinae</taxon>
        <taxon>Varicellovirus</taxon>
        <taxon>Varicellovirus humanalpha3</taxon>
        <taxon>Human herpesvirus 3</taxon>
    </lineage>
</organism>
<organismHost>
    <name type="scientific">Homo sapiens</name>
    <name type="common">Human</name>
    <dbReference type="NCBI Taxonomy" id="9606"/>
</organismHost>
<gene>
    <name type="primary">61</name>
</gene>